<protein>
    <recommendedName>
        <fullName>ATP synthase protein 8</fullName>
    </recommendedName>
    <alternativeName>
        <fullName>A6L</fullName>
    </alternativeName>
    <alternativeName>
        <fullName>F-ATPase subunit 8</fullName>
    </alternativeName>
</protein>
<evidence type="ECO:0000250" key="1"/>
<evidence type="ECO:0000255" key="2"/>
<evidence type="ECO:0000256" key="3">
    <source>
        <dbReference type="SAM" id="MobiDB-lite"/>
    </source>
</evidence>
<evidence type="ECO:0000305" key="4"/>
<keyword id="KW-0066">ATP synthesis</keyword>
<keyword id="KW-0138">CF(0)</keyword>
<keyword id="KW-0375">Hydrogen ion transport</keyword>
<keyword id="KW-0406">Ion transport</keyword>
<keyword id="KW-0472">Membrane</keyword>
<keyword id="KW-0496">Mitochondrion</keyword>
<keyword id="KW-0812">Transmembrane</keyword>
<keyword id="KW-1133">Transmembrane helix</keyword>
<keyword id="KW-0813">Transport</keyword>
<reference key="1">
    <citation type="journal article" date="1999" name="Mol. Biol. Evol.">
        <title>Phylogenetic relationships of the enigmatic hoatzin (Opisthocomus hoazin) resolved using mitochondrial and nuclear gene sequences.</title>
        <authorList>
            <person name="Hughes J.M."/>
            <person name="Baker A.J."/>
        </authorList>
    </citation>
    <scope>NUCLEOTIDE SEQUENCE [GENOMIC DNA]</scope>
</reference>
<organism>
    <name type="scientific">Corythaeola cristata</name>
    <name type="common">Great blue turaco</name>
    <dbReference type="NCBI Taxonomy" id="103954"/>
    <lineage>
        <taxon>Eukaryota</taxon>
        <taxon>Metazoa</taxon>
        <taxon>Chordata</taxon>
        <taxon>Craniata</taxon>
        <taxon>Vertebrata</taxon>
        <taxon>Euteleostomi</taxon>
        <taxon>Archelosauria</taxon>
        <taxon>Archosauria</taxon>
        <taxon>Dinosauria</taxon>
        <taxon>Saurischia</taxon>
        <taxon>Theropoda</taxon>
        <taxon>Coelurosauria</taxon>
        <taxon>Aves</taxon>
        <taxon>Neognathae</taxon>
        <taxon>Neoaves</taxon>
        <taxon>Otidimorphae</taxon>
        <taxon>Musophagiformes</taxon>
        <taxon>Musophagidae</taxon>
        <taxon>Corythaeola</taxon>
    </lineage>
</organism>
<feature type="chain" id="PRO_0000195513" description="ATP synthase protein 8">
    <location>
        <begin position="1"/>
        <end position="55"/>
    </location>
</feature>
<feature type="transmembrane region" description="Helical" evidence="2">
    <location>
        <begin position="7"/>
        <end position="24"/>
    </location>
</feature>
<feature type="region of interest" description="Disordered" evidence="3">
    <location>
        <begin position="35"/>
        <end position="55"/>
    </location>
</feature>
<feature type="compositionally biased region" description="Low complexity" evidence="3">
    <location>
        <begin position="37"/>
        <end position="55"/>
    </location>
</feature>
<proteinExistence type="inferred from homology"/>
<gene>
    <name type="primary">MT-ATP8</name>
    <name type="synonym">ATP8</name>
    <name type="synonym">ATPASE8</name>
    <name type="synonym">MTATP8</name>
</gene>
<name>ATP8_CORCR</name>
<comment type="function">
    <text evidence="1">Mitochondrial membrane ATP synthase (F(1)F(0) ATP synthase or Complex V) produces ATP from ADP in the presence of a proton gradient across the membrane which is generated by electron transport complexes of the respiratory chain. F-type ATPases consist of two structural domains, F(1) - containing the extramembraneous catalytic core and F(0) - containing the membrane proton channel, linked together by a central stalk and a peripheral stalk. During catalysis, ATP synthesis in the catalytic domain of F(1) is coupled via a rotary mechanism of the central stalk subunits to proton translocation. Part of the complex F(0) domain. Minor subunit located with subunit a in the membrane (By similarity).</text>
</comment>
<comment type="subunit">
    <text evidence="1">F-type ATPases have 2 components, CF(1) - the catalytic core - and CF(0) - the membrane proton channel.</text>
</comment>
<comment type="subcellular location">
    <subcellularLocation>
        <location>Mitochondrion membrane</location>
        <topology>Single-pass membrane protein</topology>
    </subcellularLocation>
</comment>
<comment type="similarity">
    <text evidence="4">Belongs to the ATPase protein 8 family.</text>
</comment>
<sequence>MPQLNPNPWLFIMLMSWLTFSLIIQPKLLPFTPINPPSNKTPTTTKTSPWTWPWT</sequence>
<accession>Q9TBI7</accession>
<geneLocation type="mitochondrion"/>
<dbReference type="EMBL" id="AF168038">
    <property type="protein sequence ID" value="AAD56466.1"/>
    <property type="molecule type" value="Genomic_DNA"/>
</dbReference>
<dbReference type="SMR" id="Q9TBI7"/>
<dbReference type="GO" id="GO:0031966">
    <property type="term" value="C:mitochondrial membrane"/>
    <property type="evidence" value="ECO:0007669"/>
    <property type="project" value="UniProtKB-SubCell"/>
</dbReference>
<dbReference type="GO" id="GO:0045259">
    <property type="term" value="C:proton-transporting ATP synthase complex"/>
    <property type="evidence" value="ECO:0007669"/>
    <property type="project" value="UniProtKB-KW"/>
</dbReference>
<dbReference type="GO" id="GO:0015078">
    <property type="term" value="F:proton transmembrane transporter activity"/>
    <property type="evidence" value="ECO:0007669"/>
    <property type="project" value="InterPro"/>
</dbReference>
<dbReference type="GO" id="GO:0015986">
    <property type="term" value="P:proton motive force-driven ATP synthesis"/>
    <property type="evidence" value="ECO:0007669"/>
    <property type="project" value="InterPro"/>
</dbReference>
<dbReference type="InterPro" id="IPR001421">
    <property type="entry name" value="ATP8_metazoa"/>
</dbReference>
<dbReference type="InterPro" id="IPR050635">
    <property type="entry name" value="ATPase_protein_8"/>
</dbReference>
<dbReference type="PANTHER" id="PTHR39937">
    <property type="entry name" value="ATP SYNTHASE PROTEIN 8"/>
    <property type="match status" value="1"/>
</dbReference>
<dbReference type="PANTHER" id="PTHR39937:SF1">
    <property type="entry name" value="ATP SYNTHASE PROTEIN 8"/>
    <property type="match status" value="1"/>
</dbReference>
<dbReference type="Pfam" id="PF00895">
    <property type="entry name" value="ATP-synt_8"/>
    <property type="match status" value="1"/>
</dbReference>